<evidence type="ECO:0000255" key="1">
    <source>
        <dbReference type="HAMAP-Rule" id="MF_00109"/>
    </source>
</evidence>
<name>AROK_BACC2</name>
<comment type="function">
    <text evidence="1">Catalyzes the specific phosphorylation of the 3-hydroxyl group of shikimic acid using ATP as a cosubstrate.</text>
</comment>
<comment type="catalytic activity">
    <reaction evidence="1">
        <text>shikimate + ATP = 3-phosphoshikimate + ADP + H(+)</text>
        <dbReference type="Rhea" id="RHEA:13121"/>
        <dbReference type="ChEBI" id="CHEBI:15378"/>
        <dbReference type="ChEBI" id="CHEBI:30616"/>
        <dbReference type="ChEBI" id="CHEBI:36208"/>
        <dbReference type="ChEBI" id="CHEBI:145989"/>
        <dbReference type="ChEBI" id="CHEBI:456216"/>
        <dbReference type="EC" id="2.7.1.71"/>
    </reaction>
</comment>
<comment type="cofactor">
    <cofactor evidence="1">
        <name>Mg(2+)</name>
        <dbReference type="ChEBI" id="CHEBI:18420"/>
    </cofactor>
    <text evidence="1">Binds 1 Mg(2+) ion per subunit.</text>
</comment>
<comment type="pathway">
    <text evidence="1">Metabolic intermediate biosynthesis; chorismate biosynthesis; chorismate from D-erythrose 4-phosphate and phosphoenolpyruvate: step 5/7.</text>
</comment>
<comment type="subunit">
    <text evidence="1">Monomer.</text>
</comment>
<comment type="subcellular location">
    <subcellularLocation>
        <location evidence="1">Cytoplasm</location>
    </subcellularLocation>
</comment>
<comment type="similarity">
    <text evidence="1">Belongs to the shikimate kinase family.</text>
</comment>
<dbReference type="EC" id="2.7.1.71" evidence="1"/>
<dbReference type="EMBL" id="CP001186">
    <property type="protein sequence ID" value="ACK94373.1"/>
    <property type="molecule type" value="Genomic_DNA"/>
</dbReference>
<dbReference type="RefSeq" id="WP_000836666.1">
    <property type="nucleotide sequence ID" value="NC_011772.1"/>
</dbReference>
<dbReference type="SMR" id="B7IXM2"/>
<dbReference type="KEGG" id="bcg:BCG9842_B0893"/>
<dbReference type="HOGENOM" id="CLU_057607_4_3_9"/>
<dbReference type="UniPathway" id="UPA00053">
    <property type="reaction ID" value="UER00088"/>
</dbReference>
<dbReference type="Proteomes" id="UP000006744">
    <property type="component" value="Chromosome"/>
</dbReference>
<dbReference type="GO" id="GO:0005829">
    <property type="term" value="C:cytosol"/>
    <property type="evidence" value="ECO:0007669"/>
    <property type="project" value="TreeGrafter"/>
</dbReference>
<dbReference type="GO" id="GO:0005524">
    <property type="term" value="F:ATP binding"/>
    <property type="evidence" value="ECO:0007669"/>
    <property type="project" value="UniProtKB-UniRule"/>
</dbReference>
<dbReference type="GO" id="GO:0000287">
    <property type="term" value="F:magnesium ion binding"/>
    <property type="evidence" value="ECO:0007669"/>
    <property type="project" value="UniProtKB-UniRule"/>
</dbReference>
<dbReference type="GO" id="GO:0004765">
    <property type="term" value="F:shikimate kinase activity"/>
    <property type="evidence" value="ECO:0007669"/>
    <property type="project" value="UniProtKB-UniRule"/>
</dbReference>
<dbReference type="GO" id="GO:0008652">
    <property type="term" value="P:amino acid biosynthetic process"/>
    <property type="evidence" value="ECO:0007669"/>
    <property type="project" value="UniProtKB-KW"/>
</dbReference>
<dbReference type="GO" id="GO:0009073">
    <property type="term" value="P:aromatic amino acid family biosynthetic process"/>
    <property type="evidence" value="ECO:0007669"/>
    <property type="project" value="UniProtKB-KW"/>
</dbReference>
<dbReference type="GO" id="GO:0009423">
    <property type="term" value="P:chorismate biosynthetic process"/>
    <property type="evidence" value="ECO:0007669"/>
    <property type="project" value="UniProtKB-UniRule"/>
</dbReference>
<dbReference type="CDD" id="cd00464">
    <property type="entry name" value="SK"/>
    <property type="match status" value="1"/>
</dbReference>
<dbReference type="Gene3D" id="3.40.50.300">
    <property type="entry name" value="P-loop containing nucleotide triphosphate hydrolases"/>
    <property type="match status" value="1"/>
</dbReference>
<dbReference type="HAMAP" id="MF_00109">
    <property type="entry name" value="Shikimate_kinase"/>
    <property type="match status" value="1"/>
</dbReference>
<dbReference type="InterPro" id="IPR027417">
    <property type="entry name" value="P-loop_NTPase"/>
</dbReference>
<dbReference type="InterPro" id="IPR031322">
    <property type="entry name" value="Shikimate/glucono_kinase"/>
</dbReference>
<dbReference type="InterPro" id="IPR000623">
    <property type="entry name" value="Shikimate_kinase/TSH1"/>
</dbReference>
<dbReference type="PANTHER" id="PTHR21087">
    <property type="entry name" value="SHIKIMATE KINASE"/>
    <property type="match status" value="1"/>
</dbReference>
<dbReference type="PANTHER" id="PTHR21087:SF16">
    <property type="entry name" value="SHIKIMATE KINASE 1, CHLOROPLASTIC"/>
    <property type="match status" value="1"/>
</dbReference>
<dbReference type="Pfam" id="PF01202">
    <property type="entry name" value="SKI"/>
    <property type="match status" value="1"/>
</dbReference>
<dbReference type="PRINTS" id="PR01100">
    <property type="entry name" value="SHIKIMTKNASE"/>
</dbReference>
<dbReference type="SUPFAM" id="SSF52540">
    <property type="entry name" value="P-loop containing nucleoside triphosphate hydrolases"/>
    <property type="match status" value="1"/>
</dbReference>
<gene>
    <name evidence="1" type="primary">aroK</name>
    <name type="ordered locus">BCG9842_B0893</name>
</gene>
<organism>
    <name type="scientific">Bacillus cereus (strain G9842)</name>
    <dbReference type="NCBI Taxonomy" id="405531"/>
    <lineage>
        <taxon>Bacteria</taxon>
        <taxon>Bacillati</taxon>
        <taxon>Bacillota</taxon>
        <taxon>Bacilli</taxon>
        <taxon>Bacillales</taxon>
        <taxon>Bacillaceae</taxon>
        <taxon>Bacillus</taxon>
        <taxon>Bacillus cereus group</taxon>
    </lineage>
</organism>
<protein>
    <recommendedName>
        <fullName evidence="1">Shikimate kinase</fullName>
        <shortName evidence="1">SK</shortName>
        <ecNumber evidence="1">2.7.1.71</ecNumber>
    </recommendedName>
</protein>
<accession>B7IXM2</accession>
<reference key="1">
    <citation type="submission" date="2008-10" db="EMBL/GenBank/DDBJ databases">
        <title>Genome sequence of Bacillus cereus G9842.</title>
        <authorList>
            <person name="Dodson R.J."/>
            <person name="Durkin A.S."/>
            <person name="Rosovitz M.J."/>
            <person name="Rasko D.A."/>
            <person name="Hoffmaster A."/>
            <person name="Ravel J."/>
            <person name="Sutton G."/>
        </authorList>
    </citation>
    <scope>NUCLEOTIDE SEQUENCE [LARGE SCALE GENOMIC DNA]</scope>
    <source>
        <strain>G9842</strain>
    </source>
</reference>
<proteinExistence type="inferred from homology"/>
<keyword id="KW-0028">Amino-acid biosynthesis</keyword>
<keyword id="KW-0057">Aromatic amino acid biosynthesis</keyword>
<keyword id="KW-0067">ATP-binding</keyword>
<keyword id="KW-0963">Cytoplasm</keyword>
<keyword id="KW-0418">Kinase</keyword>
<keyword id="KW-0460">Magnesium</keyword>
<keyword id="KW-0479">Metal-binding</keyword>
<keyword id="KW-0547">Nucleotide-binding</keyword>
<keyword id="KW-0808">Transferase</keyword>
<feature type="chain" id="PRO_1000117453" description="Shikimate kinase">
    <location>
        <begin position="1"/>
        <end position="165"/>
    </location>
</feature>
<feature type="binding site" evidence="1">
    <location>
        <begin position="11"/>
        <end position="16"/>
    </location>
    <ligand>
        <name>ATP</name>
        <dbReference type="ChEBI" id="CHEBI:30616"/>
    </ligand>
</feature>
<feature type="binding site" evidence="1">
    <location>
        <position position="15"/>
    </location>
    <ligand>
        <name>Mg(2+)</name>
        <dbReference type="ChEBI" id="CHEBI:18420"/>
    </ligand>
</feature>
<feature type="binding site" evidence="1">
    <location>
        <position position="33"/>
    </location>
    <ligand>
        <name>substrate</name>
    </ligand>
</feature>
<feature type="binding site" evidence="1">
    <location>
        <position position="57"/>
    </location>
    <ligand>
        <name>substrate</name>
    </ligand>
</feature>
<feature type="binding site" evidence="1">
    <location>
        <position position="78"/>
    </location>
    <ligand>
        <name>substrate</name>
    </ligand>
</feature>
<feature type="binding site" evidence="1">
    <location>
        <position position="116"/>
    </location>
    <ligand>
        <name>ATP</name>
        <dbReference type="ChEBI" id="CHEBI:30616"/>
    </ligand>
</feature>
<feature type="binding site" evidence="1">
    <location>
        <position position="134"/>
    </location>
    <ligand>
        <name>substrate</name>
    </ligand>
</feature>
<sequence length="165" mass="19200">MKSIYITGYMGAGKTTIGKALSQELQMDVVDTDQKIEEKQKKAIRDIFAEEGEMTFREYESEMLRSLPVHNVIITTGGGIIERAENRKWMKENGTVVYLYCDPNVIAERLREDTTRPLFQKKDIDAFVKKFESRRAYYEEAHIHIDTTNKSVKQIMNELKEKINV</sequence>